<evidence type="ECO:0000250" key="1">
    <source>
        <dbReference type="UniProtKB" id="P0CK64"/>
    </source>
</evidence>
<evidence type="ECO:0000250" key="2">
    <source>
        <dbReference type="UniProtKB" id="P0CK68"/>
    </source>
</evidence>
<evidence type="ECO:0000250" key="3">
    <source>
        <dbReference type="UniProtKB" id="P0DJW8"/>
    </source>
</evidence>
<evidence type="ECO:0000250" key="4">
    <source>
        <dbReference type="UniProtKB" id="P0DXO5"/>
    </source>
</evidence>
<evidence type="ECO:0000305" key="5"/>
<name>PAX_I96A0</name>
<protein>
    <recommendedName>
        <fullName>Protein PA-X</fullName>
    </recommendedName>
</protein>
<accession>P0CK63</accession>
<comment type="function">
    <text evidence="1 4">Plays a major role in the shutoff of the host protein expression by cleaving mRNAs probably via an endonuclease activity. This host shutoff allows the virus to escape from the host antiviral response (By similarity). Hijacks host RNA splicing machinery to selectively target host RNAs containing introns for destruction (By similarity). This may explain the preferential degradation of RNAs that have undergone co- or post-transcriptional processing (By similarity).</text>
</comment>
<comment type="subcellular location">
    <subcellularLocation>
        <location evidence="4">Host cytoplasm</location>
    </subcellularLocation>
    <subcellularLocation>
        <location evidence="4">Host nucleus</location>
    </subcellularLocation>
</comment>
<comment type="alternative products">
    <event type="ribosomal frameshifting"/>
    <isoform>
        <id>P0CK63-1</id>
        <name>PA-X</name>
        <sequence type="displayed"/>
    </isoform>
    <isoform>
        <id>Q9Q0U9-1</id>
        <name>PA</name>
        <sequence type="external"/>
    </isoform>
</comment>
<comment type="domain">
    <text evidence="1 4">The probable endonuclease active site in the N-terminus and the basic amino acid cluster in the C-terminus are important for the shutoff activity. The C-terminus acts as a nuclear localization signal (By similarity). The C-terminus is recruited to host protein complexes involved in nuclear Pol II RNA processing (By similarity).</text>
</comment>
<comment type="similarity">
    <text evidence="5">Belongs to the influenza viruses PA-X family.</text>
</comment>
<dbReference type="EMBL" id="AF144302">
    <property type="status" value="NOT_ANNOTATED_CDS"/>
    <property type="molecule type" value="Genomic_RNA"/>
</dbReference>
<dbReference type="RefSeq" id="YP_006495800.1">
    <molecule id="P0CK63-1"/>
    <property type="nucleotide sequence ID" value="NC_007359.1"/>
</dbReference>
<dbReference type="SMR" id="P0CK63"/>
<dbReference type="KEGG" id="vg:13229455"/>
<dbReference type="OrthoDB" id="495at10239"/>
<dbReference type="Proteomes" id="UP000131152">
    <property type="component" value="Genome"/>
</dbReference>
<dbReference type="GO" id="GO:0003723">
    <property type="term" value="F:RNA binding"/>
    <property type="evidence" value="ECO:0007669"/>
    <property type="project" value="InterPro"/>
</dbReference>
<dbReference type="GO" id="GO:0039694">
    <property type="term" value="P:viral RNA genome replication"/>
    <property type="evidence" value="ECO:0007669"/>
    <property type="project" value="InterPro"/>
</dbReference>
<dbReference type="GO" id="GO:0075523">
    <property type="term" value="P:viral translational frameshifting"/>
    <property type="evidence" value="ECO:0007669"/>
    <property type="project" value="UniProtKB-KW"/>
</dbReference>
<dbReference type="FunFam" id="3.40.91.90:FF:000001">
    <property type="entry name" value="Polymerase acidic protein"/>
    <property type="match status" value="1"/>
</dbReference>
<dbReference type="Gene3D" id="3.40.91.90">
    <property type="entry name" value="Influenza RNA-dependent RNA polymerase subunit PA, endonuclease domain"/>
    <property type="match status" value="1"/>
</dbReference>
<dbReference type="InterPro" id="IPR001009">
    <property type="entry name" value="PA/PA-X"/>
</dbReference>
<dbReference type="InterPro" id="IPR038372">
    <property type="entry name" value="PA/PA-X_sf"/>
</dbReference>
<dbReference type="Pfam" id="PF00603">
    <property type="entry name" value="Flu_PA"/>
    <property type="match status" value="1"/>
</dbReference>
<gene>
    <name type="primary">PA</name>
</gene>
<organism>
    <name type="scientific">Influenza A virus (strain A/Goose/Guangdong/1/1996 H5N1 genotype Gs/Gd)</name>
    <dbReference type="NCBI Taxonomy" id="93838"/>
    <lineage>
        <taxon>Viruses</taxon>
        <taxon>Riboviria</taxon>
        <taxon>Orthornavirae</taxon>
        <taxon>Negarnaviricota</taxon>
        <taxon>Polyploviricotina</taxon>
        <taxon>Insthoviricetes</taxon>
        <taxon>Articulavirales</taxon>
        <taxon>Orthomyxoviridae</taxon>
        <taxon>Alphainfluenzavirus</taxon>
        <taxon>Alphainfluenzavirus influenzae</taxon>
        <taxon>Influenza A virus</taxon>
    </lineage>
</organism>
<keyword id="KW-1132">Decay of host mRNAs by virus</keyword>
<keyword id="KW-1262">Eukaryotic host gene expression shutoff by virus</keyword>
<keyword id="KW-1035">Host cytoplasm</keyword>
<keyword id="KW-1190">Host gene expression shutoff by virus</keyword>
<keyword id="KW-1192">Host mRNA suppression by virus</keyword>
<keyword id="KW-1048">Host nucleus</keyword>
<keyword id="KW-0945">Host-virus interaction</keyword>
<keyword id="KW-1185">Reference proteome</keyword>
<keyword id="KW-0688">Ribosomal frameshifting</keyword>
<sequence>MEDFVRQCFNPMIVELAEKAMKEYGEDPKIETNKFAAICTHLEVCFMYSDFHFIDERGESTIIESGDPNALLKHRFEIIEGRDRTMAWTVVNSICNTTGVEKPKFLPDLYDYKENRFIEIGVTRREVHTYYLEKANKIKSEKTHIHIFSFTGEEMATKADYTLDEESRARIKTRLFTIRQEMASRGLWDSFVSPREAKRQLKKDLKSQGLCAGLPTKVSHLISPALKNLEPMWMDSNRTAALRASFLKCRKK</sequence>
<feature type="chain" id="PRO_0000419346" description="Protein PA-X">
    <location>
        <begin position="1"/>
        <end position="252"/>
    </location>
</feature>
<feature type="active site" evidence="2">
    <location>
        <position position="80"/>
    </location>
</feature>
<feature type="active site" evidence="2">
    <location>
        <position position="108"/>
    </location>
</feature>
<feature type="site" description="Important for efficient shutoff activity and nuclear localization" evidence="4">
    <location>
        <position position="195"/>
    </location>
</feature>
<feature type="site" description="Important for efficient shutoff activity and nuclear localization" evidence="4">
    <location>
        <position position="198"/>
    </location>
</feature>
<feature type="site" description="Important for efficient shutoff activity and nuclear localization" evidence="4">
    <location>
        <position position="199"/>
    </location>
</feature>
<feature type="site" description="Important for efficient shutoff activity" evidence="3">
    <location>
        <position position="202"/>
    </location>
</feature>
<feature type="site" description="Important for efficient shutoff activity" evidence="3">
    <location>
        <position position="203"/>
    </location>
</feature>
<feature type="site" description="Important for efficient shutoff activity" evidence="3">
    <location>
        <position position="206"/>
    </location>
</feature>
<proteinExistence type="inferred from homology"/>
<reference key="1">
    <citation type="journal article" date="1999" name="Virology">
        <title>Genetic characterization of the pathogenic influenza A/Goose/Guangdong/1/96 (H5N1) virus: similarity of its hemagglutinin gene to those of H5N1 viruses from the 1997 outbreaks in Hong Kong.</title>
        <authorList>
            <person name="Xu X."/>
            <person name="Subbarao K."/>
            <person name="Cox N.J."/>
            <person name="Guo Y."/>
        </authorList>
    </citation>
    <scope>NUCLEOTIDE SEQUENCE [GENOMIC RNA]</scope>
</reference>
<organismHost>
    <name type="scientific">Aves</name>
    <dbReference type="NCBI Taxonomy" id="8782"/>
</organismHost>
<organismHost>
    <name type="scientific">Felis catus</name>
    <name type="common">Cat</name>
    <name type="synonym">Felis silvestris catus</name>
    <dbReference type="NCBI Taxonomy" id="9685"/>
</organismHost>
<organismHost>
    <name type="scientific">Homo sapiens</name>
    <name type="common">Human</name>
    <dbReference type="NCBI Taxonomy" id="9606"/>
</organismHost>
<organismHost>
    <name type="scientific">Panthera pardus</name>
    <name type="common">Leopard</name>
    <name type="synonym">Felis pardus</name>
    <dbReference type="NCBI Taxonomy" id="9691"/>
</organismHost>
<organismHost>
    <name type="scientific">Panthera tigris</name>
    <name type="common">Tiger</name>
    <dbReference type="NCBI Taxonomy" id="9694"/>
</organismHost>
<organismHost>
    <name type="scientific">Sus scrofa</name>
    <name type="common">Pig</name>
    <dbReference type="NCBI Taxonomy" id="9823"/>
</organismHost>